<organism>
    <name type="scientific">Neisseria gonorrhoeae (strain NCCP11945)</name>
    <dbReference type="NCBI Taxonomy" id="521006"/>
    <lineage>
        <taxon>Bacteria</taxon>
        <taxon>Pseudomonadati</taxon>
        <taxon>Pseudomonadota</taxon>
        <taxon>Betaproteobacteria</taxon>
        <taxon>Neisseriales</taxon>
        <taxon>Neisseriaceae</taxon>
        <taxon>Neisseria</taxon>
    </lineage>
</organism>
<reference key="1">
    <citation type="journal article" date="2008" name="J. Bacteriol.">
        <title>Complete genome sequence of Neisseria gonorrhoeae NCCP11945.</title>
        <authorList>
            <person name="Chung G.T."/>
            <person name="Yoo J.S."/>
            <person name="Oh H.B."/>
            <person name="Lee Y.S."/>
            <person name="Cha S.H."/>
            <person name="Kim S.J."/>
            <person name="Yoo C.K."/>
        </authorList>
    </citation>
    <scope>NUCLEOTIDE SEQUENCE [LARGE SCALE GENOMIC DNA]</scope>
    <source>
        <strain>NCCP11945</strain>
    </source>
</reference>
<protein>
    <recommendedName>
        <fullName evidence="1">Ribosomal RNA large subunit methyltransferase E</fullName>
        <ecNumber evidence="1">2.1.1.166</ecNumber>
    </recommendedName>
    <alternativeName>
        <fullName evidence="1">23S rRNA Um2552 methyltransferase</fullName>
    </alternativeName>
    <alternativeName>
        <fullName evidence="1">rRNA (uridine-2'-O-)-methyltransferase</fullName>
    </alternativeName>
</protein>
<name>RLME_NEIG2</name>
<dbReference type="EC" id="2.1.1.166" evidence="1"/>
<dbReference type="EMBL" id="CP001050">
    <property type="protein sequence ID" value="ACF29233.1"/>
    <property type="molecule type" value="Genomic_DNA"/>
</dbReference>
<dbReference type="RefSeq" id="WP_003687807.1">
    <property type="nucleotide sequence ID" value="NC_011035.1"/>
</dbReference>
<dbReference type="SMR" id="B4RK82"/>
<dbReference type="KEGG" id="ngk:NGK_0542"/>
<dbReference type="HOGENOM" id="CLU_009422_4_0_4"/>
<dbReference type="Proteomes" id="UP000002564">
    <property type="component" value="Chromosome"/>
</dbReference>
<dbReference type="GO" id="GO:0005737">
    <property type="term" value="C:cytoplasm"/>
    <property type="evidence" value="ECO:0007669"/>
    <property type="project" value="UniProtKB-SubCell"/>
</dbReference>
<dbReference type="GO" id="GO:0008650">
    <property type="term" value="F:rRNA (uridine-2'-O-)-methyltransferase activity"/>
    <property type="evidence" value="ECO:0007669"/>
    <property type="project" value="UniProtKB-UniRule"/>
</dbReference>
<dbReference type="FunFam" id="3.40.50.150:FF:000005">
    <property type="entry name" value="Ribosomal RNA large subunit methyltransferase E"/>
    <property type="match status" value="1"/>
</dbReference>
<dbReference type="Gene3D" id="3.40.50.150">
    <property type="entry name" value="Vaccinia Virus protein VP39"/>
    <property type="match status" value="1"/>
</dbReference>
<dbReference type="HAMAP" id="MF_01547">
    <property type="entry name" value="RNA_methyltr_E"/>
    <property type="match status" value="1"/>
</dbReference>
<dbReference type="InterPro" id="IPR050082">
    <property type="entry name" value="RNA_methyltr_RlmE"/>
</dbReference>
<dbReference type="InterPro" id="IPR002877">
    <property type="entry name" value="RNA_MeTrfase_FtsJ_dom"/>
</dbReference>
<dbReference type="InterPro" id="IPR015507">
    <property type="entry name" value="rRNA-MeTfrase_E"/>
</dbReference>
<dbReference type="InterPro" id="IPR029063">
    <property type="entry name" value="SAM-dependent_MTases_sf"/>
</dbReference>
<dbReference type="PANTHER" id="PTHR10920">
    <property type="entry name" value="RIBOSOMAL RNA METHYLTRANSFERASE"/>
    <property type="match status" value="1"/>
</dbReference>
<dbReference type="PANTHER" id="PTHR10920:SF18">
    <property type="entry name" value="RRNA METHYLTRANSFERASE 2, MITOCHONDRIAL"/>
    <property type="match status" value="1"/>
</dbReference>
<dbReference type="Pfam" id="PF01728">
    <property type="entry name" value="FtsJ"/>
    <property type="match status" value="1"/>
</dbReference>
<dbReference type="PIRSF" id="PIRSF005461">
    <property type="entry name" value="23S_rRNA_mtase"/>
    <property type="match status" value="1"/>
</dbReference>
<dbReference type="SUPFAM" id="SSF53335">
    <property type="entry name" value="S-adenosyl-L-methionine-dependent methyltransferases"/>
    <property type="match status" value="1"/>
</dbReference>
<sequence>MAVRSKSSKAWLHEHINDHYVHMAQKDGYRARAAYKLLEINEKDKIIKPGTVLADLGSAPGSWSQVAAKLTGTSGTVFALDILPMEAIGGVSFIQGDFRENDVLAQFETLLDNRPLDLVICDMAPNMSGNAVSDQARSFYLCELALDFASQHLKTGGSFLVKVFQGAGYQEYMAAMREIFGTVQTRKPEASRNRSSEIYLLGKNKR</sequence>
<keyword id="KW-0963">Cytoplasm</keyword>
<keyword id="KW-0489">Methyltransferase</keyword>
<keyword id="KW-0698">rRNA processing</keyword>
<keyword id="KW-0949">S-adenosyl-L-methionine</keyword>
<keyword id="KW-0808">Transferase</keyword>
<proteinExistence type="inferred from homology"/>
<gene>
    <name evidence="1" type="primary">rlmE</name>
    <name evidence="1" type="synonym">ftsJ</name>
    <name evidence="1" type="synonym">rrmJ</name>
    <name type="ordered locus">NGK_0542</name>
</gene>
<accession>B4RK82</accession>
<evidence type="ECO:0000255" key="1">
    <source>
        <dbReference type="HAMAP-Rule" id="MF_01547"/>
    </source>
</evidence>
<comment type="function">
    <text evidence="1">Specifically methylates the uridine in position 2552 of 23S rRNA at the 2'-O position of the ribose in the fully assembled 50S ribosomal subunit.</text>
</comment>
<comment type="catalytic activity">
    <reaction evidence="1">
        <text>uridine(2552) in 23S rRNA + S-adenosyl-L-methionine = 2'-O-methyluridine(2552) in 23S rRNA + S-adenosyl-L-homocysteine + H(+)</text>
        <dbReference type="Rhea" id="RHEA:42720"/>
        <dbReference type="Rhea" id="RHEA-COMP:10202"/>
        <dbReference type="Rhea" id="RHEA-COMP:10203"/>
        <dbReference type="ChEBI" id="CHEBI:15378"/>
        <dbReference type="ChEBI" id="CHEBI:57856"/>
        <dbReference type="ChEBI" id="CHEBI:59789"/>
        <dbReference type="ChEBI" id="CHEBI:65315"/>
        <dbReference type="ChEBI" id="CHEBI:74478"/>
        <dbReference type="EC" id="2.1.1.166"/>
    </reaction>
</comment>
<comment type="subcellular location">
    <subcellularLocation>
        <location evidence="1">Cytoplasm</location>
    </subcellularLocation>
</comment>
<comment type="similarity">
    <text evidence="1">Belongs to the class I-like SAM-binding methyltransferase superfamily. RNA methyltransferase RlmE family.</text>
</comment>
<feature type="chain" id="PRO_1000195003" description="Ribosomal RNA large subunit methyltransferase E">
    <location>
        <begin position="1"/>
        <end position="206"/>
    </location>
</feature>
<feature type="active site" description="Proton acceptor" evidence="1">
    <location>
        <position position="162"/>
    </location>
</feature>
<feature type="binding site" evidence="1">
    <location>
        <position position="61"/>
    </location>
    <ligand>
        <name>S-adenosyl-L-methionine</name>
        <dbReference type="ChEBI" id="CHEBI:59789"/>
    </ligand>
</feature>
<feature type="binding site" evidence="1">
    <location>
        <position position="63"/>
    </location>
    <ligand>
        <name>S-adenosyl-L-methionine</name>
        <dbReference type="ChEBI" id="CHEBI:59789"/>
    </ligand>
</feature>
<feature type="binding site" evidence="1">
    <location>
        <position position="81"/>
    </location>
    <ligand>
        <name>S-adenosyl-L-methionine</name>
        <dbReference type="ChEBI" id="CHEBI:59789"/>
    </ligand>
</feature>
<feature type="binding site" evidence="1">
    <location>
        <position position="97"/>
    </location>
    <ligand>
        <name>S-adenosyl-L-methionine</name>
        <dbReference type="ChEBI" id="CHEBI:59789"/>
    </ligand>
</feature>
<feature type="binding site" evidence="1">
    <location>
        <position position="122"/>
    </location>
    <ligand>
        <name>S-adenosyl-L-methionine</name>
        <dbReference type="ChEBI" id="CHEBI:59789"/>
    </ligand>
</feature>